<organism>
    <name type="scientific">Bos taurus</name>
    <name type="common">Bovine</name>
    <dbReference type="NCBI Taxonomy" id="9913"/>
    <lineage>
        <taxon>Eukaryota</taxon>
        <taxon>Metazoa</taxon>
        <taxon>Chordata</taxon>
        <taxon>Craniata</taxon>
        <taxon>Vertebrata</taxon>
        <taxon>Euteleostomi</taxon>
        <taxon>Mammalia</taxon>
        <taxon>Eutheria</taxon>
        <taxon>Laurasiatheria</taxon>
        <taxon>Artiodactyla</taxon>
        <taxon>Ruminantia</taxon>
        <taxon>Pecora</taxon>
        <taxon>Bovidae</taxon>
        <taxon>Bovinae</taxon>
        <taxon>Bos</taxon>
    </lineage>
</organism>
<comment type="function">
    <text evidence="1">Involved in nonsense-mediated decay (NMD) of mRNAs containing premature stop codons. Is recruited by release factors to stalled ribosomes together with SMG1 and SMG9 (forming the SMG1C protein kinase complex) and, in the SMG1C complex, is required to mediate the recruitment of SMG1 to the ribosome:SURF complex and to suppress SMG1 kinase activity until the ribosome:SURF complex locates the exon junction complex (EJC). Acts as a regulator of kinase activity (By similarity).</text>
</comment>
<comment type="subunit">
    <text evidence="1">Component of the SMG1C complex composed of SMG1, SMG8 and SMG9; the recruitment of SMG8 to SMG1 N-terminus induces a large conformational change in the SMG1 C-terminal head domain containing the catalytic domain. Forms heterodimers with SMG9; this assembly form may represent a SMG1C intermediate form (By similarity).</text>
</comment>
<comment type="alternative products">
    <event type="alternative splicing"/>
    <isoform>
        <id>A1A4J7-1</id>
        <name>1</name>
        <sequence type="displayed"/>
    </isoform>
    <isoform>
        <id>A1A4J7-2</id>
        <name>2</name>
        <sequence type="described" ref="VSP_037517"/>
    </isoform>
</comment>
<comment type="PTM">
    <text evidence="1">Phosphorylated by SMG1.</text>
</comment>
<comment type="similarity">
    <text evidence="5">Belongs to the SMG8 family.</text>
</comment>
<protein>
    <recommendedName>
        <fullName evidence="2">Nonsense-mediated mRNA decay factor SMG8</fullName>
    </recommendedName>
    <alternativeName>
        <fullName>Protein smg-8 homolog</fullName>
    </alternativeName>
</protein>
<evidence type="ECO:0000250" key="1"/>
<evidence type="ECO:0000250" key="2">
    <source>
        <dbReference type="UniProtKB" id="Q8ND04"/>
    </source>
</evidence>
<evidence type="ECO:0000256" key="3">
    <source>
        <dbReference type="SAM" id="MobiDB-lite"/>
    </source>
</evidence>
<evidence type="ECO:0000303" key="4">
    <source ref="2"/>
</evidence>
<evidence type="ECO:0000305" key="5"/>
<proteinExistence type="evidence at transcript level"/>
<name>SMG8_BOVIN</name>
<dbReference type="EMBL" id="AAFC03009910">
    <property type="status" value="NOT_ANNOTATED_CDS"/>
    <property type="molecule type" value="Genomic_DNA"/>
</dbReference>
<dbReference type="EMBL" id="BC126609">
    <property type="protein sequence ID" value="AAI26610.1"/>
    <property type="molecule type" value="mRNA"/>
</dbReference>
<dbReference type="RefSeq" id="NP_001073755.1">
    <molecule id="A1A4J7-2"/>
    <property type="nucleotide sequence ID" value="NM_001080286.1"/>
</dbReference>
<dbReference type="SMR" id="A1A4J7"/>
<dbReference type="FunCoup" id="A1A4J7">
    <property type="interactions" value="4990"/>
</dbReference>
<dbReference type="STRING" id="9913.ENSBTAP00000004365"/>
<dbReference type="PaxDb" id="9913-ENSBTAP00000004365"/>
<dbReference type="GeneID" id="522040"/>
<dbReference type="KEGG" id="bta:522040"/>
<dbReference type="CTD" id="55181"/>
<dbReference type="VEuPathDB" id="HostDB:ENSBTAG00000003365"/>
<dbReference type="eggNOG" id="KOG3692">
    <property type="taxonomic scope" value="Eukaryota"/>
</dbReference>
<dbReference type="InParanoid" id="A1A4J7"/>
<dbReference type="OrthoDB" id="63589at2759"/>
<dbReference type="Reactome" id="R-BTA-975957">
    <property type="pathway name" value="Nonsense Mediated Decay (NMD) enhanced by the Exon Junction Complex (EJC)"/>
</dbReference>
<dbReference type="Proteomes" id="UP000009136">
    <property type="component" value="Chromosome 19"/>
</dbReference>
<dbReference type="Bgee" id="ENSBTAG00000003365">
    <property type="expression patterns" value="Expressed in spermatocyte and 106 other cell types or tissues"/>
</dbReference>
<dbReference type="GO" id="GO:0000184">
    <property type="term" value="P:nuclear-transcribed mRNA catabolic process, nonsense-mediated decay"/>
    <property type="evidence" value="ECO:0000250"/>
    <property type="project" value="UniProtKB"/>
</dbReference>
<dbReference type="GO" id="GO:0045859">
    <property type="term" value="P:regulation of protein kinase activity"/>
    <property type="evidence" value="ECO:0000250"/>
    <property type="project" value="UniProtKB"/>
</dbReference>
<dbReference type="InterPro" id="IPR019354">
    <property type="entry name" value="SMG8-like"/>
</dbReference>
<dbReference type="PANTHER" id="PTHR13091">
    <property type="entry name" value="AMPLIFIED IN BREAST CANCER 2-RELATED"/>
    <property type="match status" value="1"/>
</dbReference>
<dbReference type="PANTHER" id="PTHR13091:SF0">
    <property type="entry name" value="NONSENSE-MEDIATED MRNA DECAY FACTOR SMG8"/>
    <property type="match status" value="1"/>
</dbReference>
<dbReference type="Pfam" id="PF10220">
    <property type="entry name" value="Smg8_Smg9"/>
    <property type="match status" value="1"/>
</dbReference>
<sequence length="999" mass="110135">MAGPVSLRELLMGASAWTSSESPEGSPTEGGGSAAGGPEPPWREDEICVVGIFGKTALRLNSEKFSLVNTVCDRQVFPLFRHQDPGDSGAGIRTEAGAVGEAGGAGDPGAGAGAGAGAGAGDPVRGGVTAAEGNRTEPGSQDYSLLQAYYNQESKVLYLLLTSICDNSQLLRACRALQSGEAGGGLSLPHAEAHEFWKHQEKVQCLSLLYLFSVCHILLLVHPTCSFDITYDRVFRALDGLRQKVLPLLKTAIKDCPVGKDWKLNCRPCPPRLLFLFQLNGALKVEPPRNQDPAHPDKPKKHSPKRRLQHALEDQIYRIFRKSRVLTNQSINCLFTVPANQAFVYIVPGSQEEDPVGMLLDQLKSHCTVKDPESLLVPAPLSGSRRYQVMRQHSRQQLSFHTDTSSSSSSGQLVDFTLREFLWQHVELVLSKKGFDDSVGRNPQPSHFELPTYQKWISAASKLYEVAIDGKEEDPASPTGELTSKILSSIKVLEGFLDIDTKFSENRCQKALPMAHSAYQSNLPHNYTMTVHKNQLAQALRVYSQHARGPAFHKYAMQLHEDCYKFWSNGHQLCEERSLTDQHCVHKFHSLPKSGEKPEADRNPPVLYHNSRARSTGACNCGRKQAPRDDPFDIKAANYDFYQLLEEKCCGKLDHINFPVFEPSTPDPAPAKNESSPAPPDADADKLKEKEPQTQGESTSLSLALSLGQSTDSLGTYPADPQAGGDNPEVHGQGEVKTEKRPNLVDRQASTVEYLPGMLHSNCPKGLLPKFSSWSLVKLGPAKSYNFHTGLDQQGFIPGTNYLMPWDIVIRTRAEDEGDLDTNSWPAPNKAVPGKRSAVVMGRGRRRDDIARAFVGFEYEDSRGRRFMCSGPDKVMKVMGSGPKESALKALNSDMPLYILSSSQGRGLKPHYAQLMRLFVVVPDAPLQIILTPQVRPGPPPCPVFYPEKQEITLPPDGLWVLRFPYAYVTERGPCFPPKENVQLMSYKVLRGVLKAVTQ</sequence>
<accession>A1A4J7</accession>
<gene>
    <name type="primary">SMG8</name>
</gene>
<feature type="chain" id="PRO_0000378167" description="Nonsense-mediated mRNA decay factor SMG8">
    <location>
        <begin position="1"/>
        <end position="999"/>
    </location>
</feature>
<feature type="region of interest" description="Disordered" evidence="3">
    <location>
        <begin position="15"/>
        <end position="42"/>
    </location>
</feature>
<feature type="region of interest" description="Disordered" evidence="3">
    <location>
        <begin position="83"/>
        <end position="136"/>
    </location>
</feature>
<feature type="region of interest" description="Disordered" evidence="3">
    <location>
        <begin position="287"/>
        <end position="307"/>
    </location>
</feature>
<feature type="region of interest" description="Disordered" evidence="3">
    <location>
        <begin position="661"/>
        <end position="734"/>
    </location>
</feature>
<feature type="compositionally biased region" description="Low complexity" evidence="3">
    <location>
        <begin position="18"/>
        <end position="27"/>
    </location>
</feature>
<feature type="compositionally biased region" description="Gly residues" evidence="3">
    <location>
        <begin position="100"/>
        <end position="120"/>
    </location>
</feature>
<feature type="compositionally biased region" description="Basic and acidic residues" evidence="3">
    <location>
        <begin position="287"/>
        <end position="297"/>
    </location>
</feature>
<feature type="compositionally biased region" description="Basic residues" evidence="3">
    <location>
        <begin position="298"/>
        <end position="307"/>
    </location>
</feature>
<feature type="compositionally biased region" description="Basic and acidic residues" evidence="3">
    <location>
        <begin position="683"/>
        <end position="692"/>
    </location>
</feature>
<feature type="compositionally biased region" description="Polar residues" evidence="3">
    <location>
        <begin position="693"/>
        <end position="714"/>
    </location>
</feature>
<feature type="modified residue" description="Phosphoserine" evidence="2">
    <location>
        <position position="477"/>
    </location>
</feature>
<feature type="modified residue" description="Phosphoserine" evidence="2">
    <location>
        <position position="676"/>
    </location>
</feature>
<feature type="modified residue" description="Phosphoserine" evidence="2">
    <location>
        <position position="750"/>
    </location>
</feature>
<feature type="modified residue" description="Phosphoserine" evidence="2">
    <location>
        <position position="903"/>
    </location>
</feature>
<feature type="modified residue" description="Omega-N-methylarginine" evidence="2">
    <location>
        <position position="906"/>
    </location>
</feature>
<feature type="splice variant" id="VSP_037517" description="In isoform 2." evidence="4">
    <original>PGPPPCPVFYPEKQEITLPPDGLWVLRFPYAYVTERGPCFPPKENVQLMSYKVLRGVLKAVTQ</original>
    <variation>NITFCVVRQSCLLFVSIV</variation>
    <location>
        <begin position="937"/>
        <end position="999"/>
    </location>
</feature>
<reference key="1">
    <citation type="journal article" date="2009" name="Science">
        <title>The genome sequence of taurine cattle: a window to ruminant biology and evolution.</title>
        <authorList>
            <consortium name="The bovine genome sequencing and analysis consortium"/>
        </authorList>
    </citation>
    <scope>NUCLEOTIDE SEQUENCE [LARGE SCALE GENOMIC DNA]</scope>
    <source>
        <strain>Hereford</strain>
    </source>
</reference>
<reference key="2">
    <citation type="submission" date="2006-10" db="EMBL/GenBank/DDBJ databases">
        <authorList>
            <consortium name="NIH - Mammalian Gene Collection (MGC) project"/>
        </authorList>
    </citation>
    <scope>NUCLEOTIDE SEQUENCE [LARGE SCALE MRNA] (ISOFORM 2)</scope>
    <source>
        <strain>Hereford</strain>
        <tissue>Brain cortex</tissue>
    </source>
</reference>
<keyword id="KW-0025">Alternative splicing</keyword>
<keyword id="KW-0488">Methylation</keyword>
<keyword id="KW-0866">Nonsense-mediated mRNA decay</keyword>
<keyword id="KW-0597">Phosphoprotein</keyword>
<keyword id="KW-1185">Reference proteome</keyword>